<dbReference type="EC" id="2.8.1.7" evidence="1"/>
<dbReference type="EMBL" id="CP000653">
    <property type="protein sequence ID" value="ABP61691.1"/>
    <property type="molecule type" value="Genomic_DNA"/>
</dbReference>
<dbReference type="RefSeq" id="WP_015960022.1">
    <property type="nucleotide sequence ID" value="NC_009436.1"/>
</dbReference>
<dbReference type="SMR" id="A4WDB1"/>
<dbReference type="STRING" id="399742.Ent638_3027"/>
<dbReference type="GeneID" id="93305968"/>
<dbReference type="KEGG" id="ent:Ent638_3027"/>
<dbReference type="eggNOG" id="COG1104">
    <property type="taxonomic scope" value="Bacteria"/>
</dbReference>
<dbReference type="HOGENOM" id="CLU_003433_0_2_6"/>
<dbReference type="OrthoDB" id="9808002at2"/>
<dbReference type="UniPathway" id="UPA00266"/>
<dbReference type="Proteomes" id="UP000000230">
    <property type="component" value="Chromosome"/>
</dbReference>
<dbReference type="GO" id="GO:1990221">
    <property type="term" value="C:L-cysteine desulfurase complex"/>
    <property type="evidence" value="ECO:0007669"/>
    <property type="project" value="UniProtKB-ARBA"/>
</dbReference>
<dbReference type="GO" id="GO:0051537">
    <property type="term" value="F:2 iron, 2 sulfur cluster binding"/>
    <property type="evidence" value="ECO:0007669"/>
    <property type="project" value="UniProtKB-UniRule"/>
</dbReference>
<dbReference type="GO" id="GO:0031071">
    <property type="term" value="F:cysteine desulfurase activity"/>
    <property type="evidence" value="ECO:0007669"/>
    <property type="project" value="UniProtKB-UniRule"/>
</dbReference>
<dbReference type="GO" id="GO:0046872">
    <property type="term" value="F:metal ion binding"/>
    <property type="evidence" value="ECO:0007669"/>
    <property type="project" value="UniProtKB-KW"/>
</dbReference>
<dbReference type="GO" id="GO:0030170">
    <property type="term" value="F:pyridoxal phosphate binding"/>
    <property type="evidence" value="ECO:0007669"/>
    <property type="project" value="UniProtKB-UniRule"/>
</dbReference>
<dbReference type="GO" id="GO:0044571">
    <property type="term" value="P:[2Fe-2S] cluster assembly"/>
    <property type="evidence" value="ECO:0007669"/>
    <property type="project" value="UniProtKB-UniRule"/>
</dbReference>
<dbReference type="FunFam" id="3.40.640.10:FF:000003">
    <property type="entry name" value="Cysteine desulfurase IscS"/>
    <property type="match status" value="1"/>
</dbReference>
<dbReference type="FunFam" id="3.90.1150.10:FF:000002">
    <property type="entry name" value="Cysteine desulfurase IscS"/>
    <property type="match status" value="1"/>
</dbReference>
<dbReference type="Gene3D" id="3.90.1150.10">
    <property type="entry name" value="Aspartate Aminotransferase, domain 1"/>
    <property type="match status" value="1"/>
</dbReference>
<dbReference type="Gene3D" id="3.40.640.10">
    <property type="entry name" value="Type I PLP-dependent aspartate aminotransferase-like (Major domain)"/>
    <property type="match status" value="1"/>
</dbReference>
<dbReference type="HAMAP" id="MF_00331">
    <property type="entry name" value="Cys_desulf_IscS"/>
    <property type="match status" value="1"/>
</dbReference>
<dbReference type="InterPro" id="IPR000192">
    <property type="entry name" value="Aminotrans_V_dom"/>
</dbReference>
<dbReference type="InterPro" id="IPR020578">
    <property type="entry name" value="Aminotrans_V_PyrdxlP_BS"/>
</dbReference>
<dbReference type="InterPro" id="IPR010240">
    <property type="entry name" value="Cys_deSase_IscS"/>
</dbReference>
<dbReference type="InterPro" id="IPR016454">
    <property type="entry name" value="Cysteine_dSase"/>
</dbReference>
<dbReference type="InterPro" id="IPR015424">
    <property type="entry name" value="PyrdxlP-dep_Trfase"/>
</dbReference>
<dbReference type="InterPro" id="IPR015421">
    <property type="entry name" value="PyrdxlP-dep_Trfase_major"/>
</dbReference>
<dbReference type="InterPro" id="IPR015422">
    <property type="entry name" value="PyrdxlP-dep_Trfase_small"/>
</dbReference>
<dbReference type="NCBIfam" id="TIGR02006">
    <property type="entry name" value="IscS"/>
    <property type="match status" value="1"/>
</dbReference>
<dbReference type="NCBIfam" id="NF002806">
    <property type="entry name" value="PRK02948.1"/>
    <property type="match status" value="1"/>
</dbReference>
<dbReference type="NCBIfam" id="NF010611">
    <property type="entry name" value="PRK14012.1"/>
    <property type="match status" value="1"/>
</dbReference>
<dbReference type="PANTHER" id="PTHR11601:SF34">
    <property type="entry name" value="CYSTEINE DESULFURASE"/>
    <property type="match status" value="1"/>
</dbReference>
<dbReference type="PANTHER" id="PTHR11601">
    <property type="entry name" value="CYSTEINE DESULFURYLASE FAMILY MEMBER"/>
    <property type="match status" value="1"/>
</dbReference>
<dbReference type="Pfam" id="PF00266">
    <property type="entry name" value="Aminotran_5"/>
    <property type="match status" value="1"/>
</dbReference>
<dbReference type="PIRSF" id="PIRSF005572">
    <property type="entry name" value="NifS"/>
    <property type="match status" value="1"/>
</dbReference>
<dbReference type="SUPFAM" id="SSF53383">
    <property type="entry name" value="PLP-dependent transferases"/>
    <property type="match status" value="1"/>
</dbReference>
<dbReference type="PROSITE" id="PS00595">
    <property type="entry name" value="AA_TRANSFER_CLASS_5"/>
    <property type="match status" value="1"/>
</dbReference>
<sequence>MKLPIYLDYSATTPVDPRVAEKMMQCLTLDGNFGNPASRSHRFGWHAEEAVDIARNQIAELVGADPREIVFTSGATESDNLAIKGAANFYQKKGKHIITSKTEHKAVLDTCRQLEREGFDVTYLAPKSNGIIDLKELEAAMRDDTILVSIMHVNNEIGVVQDIATIGEMCRARGIIYHVDATQSVGKLPIDLSQLKVDLMSFTGHKIYGPKGIGALYVRRKPRIRIEAQMHGGGHERGMRSGTLPVHQIVGMGEAYRIAKEEMETEMARLRTLRNRLWDGVKDMEEVYLNGDLEQGVPNILNVSFNYVEGESLIMALKDLAVSSGSACTSASLEPSYVLRALGMTDELAHSSIRFSLGRFTTEEEIDYTIKLVRNSIGRLRDLSPLWEMFKQGVDINSIEWSHH</sequence>
<name>ISCS_ENT38</name>
<evidence type="ECO:0000255" key="1">
    <source>
        <dbReference type="HAMAP-Rule" id="MF_00331"/>
    </source>
</evidence>
<proteinExistence type="inferred from homology"/>
<keyword id="KW-0001">2Fe-2S</keyword>
<keyword id="KW-0963">Cytoplasm</keyword>
<keyword id="KW-0408">Iron</keyword>
<keyword id="KW-0411">Iron-sulfur</keyword>
<keyword id="KW-0479">Metal-binding</keyword>
<keyword id="KW-0663">Pyridoxal phosphate</keyword>
<keyword id="KW-0808">Transferase</keyword>
<gene>
    <name evidence="1" type="primary">iscS</name>
    <name type="ordered locus">Ent638_3027</name>
</gene>
<organism>
    <name type="scientific">Enterobacter sp. (strain 638)</name>
    <dbReference type="NCBI Taxonomy" id="399742"/>
    <lineage>
        <taxon>Bacteria</taxon>
        <taxon>Pseudomonadati</taxon>
        <taxon>Pseudomonadota</taxon>
        <taxon>Gammaproteobacteria</taxon>
        <taxon>Enterobacterales</taxon>
        <taxon>Enterobacteriaceae</taxon>
        <taxon>Enterobacter</taxon>
    </lineage>
</organism>
<feature type="chain" id="PRO_1000059492" description="Cysteine desulfurase IscS">
    <location>
        <begin position="1"/>
        <end position="404"/>
    </location>
</feature>
<feature type="active site" description="Cysteine persulfide intermediate" evidence="1">
    <location>
        <position position="328"/>
    </location>
</feature>
<feature type="binding site" evidence="1">
    <location>
        <begin position="75"/>
        <end position="76"/>
    </location>
    <ligand>
        <name>pyridoxal 5'-phosphate</name>
        <dbReference type="ChEBI" id="CHEBI:597326"/>
    </ligand>
</feature>
<feature type="binding site" evidence="1">
    <location>
        <position position="155"/>
    </location>
    <ligand>
        <name>pyridoxal 5'-phosphate</name>
        <dbReference type="ChEBI" id="CHEBI:597326"/>
    </ligand>
</feature>
<feature type="binding site" evidence="1">
    <location>
        <position position="183"/>
    </location>
    <ligand>
        <name>pyridoxal 5'-phosphate</name>
        <dbReference type="ChEBI" id="CHEBI:597326"/>
    </ligand>
</feature>
<feature type="binding site" evidence="1">
    <location>
        <begin position="203"/>
        <end position="205"/>
    </location>
    <ligand>
        <name>pyridoxal 5'-phosphate</name>
        <dbReference type="ChEBI" id="CHEBI:597326"/>
    </ligand>
</feature>
<feature type="binding site" evidence="1">
    <location>
        <position position="243"/>
    </location>
    <ligand>
        <name>pyridoxal 5'-phosphate</name>
        <dbReference type="ChEBI" id="CHEBI:597326"/>
    </ligand>
</feature>
<feature type="binding site" description="via persulfide group" evidence="1">
    <location>
        <position position="328"/>
    </location>
    <ligand>
        <name>[2Fe-2S] cluster</name>
        <dbReference type="ChEBI" id="CHEBI:190135"/>
        <note>ligand shared with IscU</note>
    </ligand>
</feature>
<feature type="modified residue" description="N6-(pyridoxal phosphate)lysine" evidence="1">
    <location>
        <position position="206"/>
    </location>
</feature>
<comment type="function">
    <text evidence="1">Master enzyme that delivers sulfur to a number of partners involved in Fe-S cluster assembly, tRNA modification or cofactor biosynthesis. Catalyzes the removal of elemental sulfur atoms from cysteine to produce alanine. Functions as a sulfur delivery protein for Fe-S cluster synthesis onto IscU, an Fe-S scaffold assembly protein, as well as other S acceptor proteins.</text>
</comment>
<comment type="catalytic activity">
    <reaction evidence="1">
        <text>(sulfur carrier)-H + L-cysteine = (sulfur carrier)-SH + L-alanine</text>
        <dbReference type="Rhea" id="RHEA:43892"/>
        <dbReference type="Rhea" id="RHEA-COMP:14737"/>
        <dbReference type="Rhea" id="RHEA-COMP:14739"/>
        <dbReference type="ChEBI" id="CHEBI:29917"/>
        <dbReference type="ChEBI" id="CHEBI:35235"/>
        <dbReference type="ChEBI" id="CHEBI:57972"/>
        <dbReference type="ChEBI" id="CHEBI:64428"/>
        <dbReference type="EC" id="2.8.1.7"/>
    </reaction>
</comment>
<comment type="cofactor">
    <cofactor evidence="1">
        <name>pyridoxal 5'-phosphate</name>
        <dbReference type="ChEBI" id="CHEBI:597326"/>
    </cofactor>
</comment>
<comment type="pathway">
    <text evidence="1">Cofactor biosynthesis; iron-sulfur cluster biosynthesis.</text>
</comment>
<comment type="subunit">
    <text evidence="1">Homodimer. Forms a heterotetramer with IscU, interacts with other sulfur acceptors.</text>
</comment>
<comment type="subcellular location">
    <subcellularLocation>
        <location evidence="1">Cytoplasm</location>
    </subcellularLocation>
</comment>
<comment type="similarity">
    <text evidence="1">Belongs to the class-V pyridoxal-phosphate-dependent aminotransferase family. NifS/IscS subfamily.</text>
</comment>
<accession>A4WDB1</accession>
<protein>
    <recommendedName>
        <fullName evidence="1">Cysteine desulfurase IscS</fullName>
        <ecNumber evidence="1">2.8.1.7</ecNumber>
    </recommendedName>
</protein>
<reference key="1">
    <citation type="journal article" date="2010" name="PLoS Genet.">
        <title>Genome sequence of the plant growth promoting endophytic bacterium Enterobacter sp. 638.</title>
        <authorList>
            <person name="Taghavi S."/>
            <person name="van der Lelie D."/>
            <person name="Hoffman A."/>
            <person name="Zhang Y.B."/>
            <person name="Walla M.D."/>
            <person name="Vangronsveld J."/>
            <person name="Newman L."/>
            <person name="Monchy S."/>
        </authorList>
    </citation>
    <scope>NUCLEOTIDE SEQUENCE [LARGE SCALE GENOMIC DNA]</scope>
    <source>
        <strain>638</strain>
    </source>
</reference>